<keyword id="KW-0458">Lysosome</keyword>
<keyword id="KW-0472">Membrane</keyword>
<keyword id="KW-0479">Metal-binding</keyword>
<keyword id="KW-1185">Reference proteome</keyword>
<keyword id="KW-0808">Transferase</keyword>
<keyword id="KW-0812">Transmembrane</keyword>
<keyword id="KW-1133">Transmembrane helix</keyword>
<keyword id="KW-0833">Ubl conjugation pathway</keyword>
<keyword id="KW-0862">Zinc</keyword>
<keyword id="KW-0863">Zinc-finger</keyword>
<accession>E1C2W7</accession>
<comment type="function">
    <text evidence="1">E3 ubiquitin-protein ligase that acts as a negative regulator of mTORC1 signaling by mediating ubiquitination of RagA/RRAGA and RHEB. Catalyzes 'Lys-63'-linked polyubiquitination of RagA/RRAGA in response to amino acid starvation, thereby regulating mTORC1 signaling. Also mediates monoubiquitination of RHEB, promoting its association with the TSC-TBC complex and subsequent inhibition. Also mediates 'Lys-48'-linked polyubiquitination of target proteins and their subsequent targeting to the proteasome for degradation.</text>
</comment>
<comment type="catalytic activity">
    <reaction evidence="1">
        <text>S-ubiquitinyl-[E2 ubiquitin-conjugating enzyme]-L-cysteine + [acceptor protein]-L-lysine = [E2 ubiquitin-conjugating enzyme]-L-cysteine + N(6)-ubiquitinyl-[acceptor protein]-L-lysine.</text>
        <dbReference type="EC" id="2.3.2.27"/>
    </reaction>
</comment>
<comment type="pathway">
    <text evidence="1">Protein modification; protein ubiquitination.</text>
</comment>
<comment type="subcellular location">
    <subcellularLocation>
        <location evidence="1">Lysosome membrane</location>
        <topology evidence="1">Single-pass membrane protein</topology>
    </subcellularLocation>
</comment>
<comment type="similarity">
    <text evidence="4">Belongs to the RNF152 family.</text>
</comment>
<reference key="1">
    <citation type="journal article" date="2004" name="Nature">
        <title>Sequence and comparative analysis of the chicken genome provide unique perspectives on vertebrate evolution.</title>
        <authorList>
            <person name="Hillier L.W."/>
            <person name="Miller W."/>
            <person name="Birney E."/>
            <person name="Warren W."/>
            <person name="Hardison R.C."/>
            <person name="Ponting C.P."/>
            <person name="Bork P."/>
            <person name="Burt D.W."/>
            <person name="Groenen M.A.M."/>
            <person name="Delany M.E."/>
            <person name="Dodgson J.B."/>
            <person name="Chinwalla A.T."/>
            <person name="Cliften P.F."/>
            <person name="Clifton S.W."/>
            <person name="Delehaunty K.D."/>
            <person name="Fronick C."/>
            <person name="Fulton R.S."/>
            <person name="Graves T.A."/>
            <person name="Kremitzki C."/>
            <person name="Layman D."/>
            <person name="Magrini V."/>
            <person name="McPherson J.D."/>
            <person name="Miner T.L."/>
            <person name="Minx P."/>
            <person name="Nash W.E."/>
            <person name="Nhan M.N."/>
            <person name="Nelson J.O."/>
            <person name="Oddy L.G."/>
            <person name="Pohl C.S."/>
            <person name="Randall-Maher J."/>
            <person name="Smith S.M."/>
            <person name="Wallis J.W."/>
            <person name="Yang S.-P."/>
            <person name="Romanov M.N."/>
            <person name="Rondelli C.M."/>
            <person name="Paton B."/>
            <person name="Smith J."/>
            <person name="Morrice D."/>
            <person name="Daniels L."/>
            <person name="Tempest H.G."/>
            <person name="Robertson L."/>
            <person name="Masabanda J.S."/>
            <person name="Griffin D.K."/>
            <person name="Vignal A."/>
            <person name="Fillon V."/>
            <person name="Jacobbson L."/>
            <person name="Kerje S."/>
            <person name="Andersson L."/>
            <person name="Crooijmans R.P."/>
            <person name="Aerts J."/>
            <person name="van der Poel J.J."/>
            <person name="Ellegren H."/>
            <person name="Caldwell R.B."/>
            <person name="Hubbard S.J."/>
            <person name="Grafham D.V."/>
            <person name="Kierzek A.M."/>
            <person name="McLaren S.R."/>
            <person name="Overton I.M."/>
            <person name="Arakawa H."/>
            <person name="Beattie K.J."/>
            <person name="Bezzubov Y."/>
            <person name="Boardman P.E."/>
            <person name="Bonfield J.K."/>
            <person name="Croning M.D.R."/>
            <person name="Davies R.M."/>
            <person name="Francis M.D."/>
            <person name="Humphray S.J."/>
            <person name="Scott C.E."/>
            <person name="Taylor R.G."/>
            <person name="Tickle C."/>
            <person name="Brown W.R.A."/>
            <person name="Rogers J."/>
            <person name="Buerstedde J.-M."/>
            <person name="Wilson S.A."/>
            <person name="Stubbs L."/>
            <person name="Ovcharenko I."/>
            <person name="Gordon L."/>
            <person name="Lucas S."/>
            <person name="Miller M.M."/>
            <person name="Inoko H."/>
            <person name="Shiina T."/>
            <person name="Kaufman J."/>
            <person name="Salomonsen J."/>
            <person name="Skjoedt K."/>
            <person name="Wong G.K.-S."/>
            <person name="Wang J."/>
            <person name="Liu B."/>
            <person name="Wang J."/>
            <person name="Yu J."/>
            <person name="Yang H."/>
            <person name="Nefedov M."/>
            <person name="Koriabine M."/>
            <person name="Dejong P.J."/>
            <person name="Goodstadt L."/>
            <person name="Webber C."/>
            <person name="Dickens N.J."/>
            <person name="Letunic I."/>
            <person name="Suyama M."/>
            <person name="Torrents D."/>
            <person name="von Mering C."/>
            <person name="Zdobnov E.M."/>
            <person name="Makova K."/>
            <person name="Nekrutenko A."/>
            <person name="Elnitski L."/>
            <person name="Eswara P."/>
            <person name="King D.C."/>
            <person name="Yang S.-P."/>
            <person name="Tyekucheva S."/>
            <person name="Radakrishnan A."/>
            <person name="Harris R.S."/>
            <person name="Chiaromonte F."/>
            <person name="Taylor J."/>
            <person name="He J."/>
            <person name="Rijnkels M."/>
            <person name="Griffiths-Jones S."/>
            <person name="Ureta-Vidal A."/>
            <person name="Hoffman M.M."/>
            <person name="Severin J."/>
            <person name="Searle S.M.J."/>
            <person name="Law A.S."/>
            <person name="Speed D."/>
            <person name="Waddington D."/>
            <person name="Cheng Z."/>
            <person name="Tuzun E."/>
            <person name="Eichler E."/>
            <person name="Bao Z."/>
            <person name="Flicek P."/>
            <person name="Shteynberg D.D."/>
            <person name="Brent M.R."/>
            <person name="Bye J.M."/>
            <person name="Huckle E.J."/>
            <person name="Chatterji S."/>
            <person name="Dewey C."/>
            <person name="Pachter L."/>
            <person name="Kouranov A."/>
            <person name="Mourelatos Z."/>
            <person name="Hatzigeorgiou A.G."/>
            <person name="Paterson A.H."/>
            <person name="Ivarie R."/>
            <person name="Brandstrom M."/>
            <person name="Axelsson E."/>
            <person name="Backstrom N."/>
            <person name="Berlin S."/>
            <person name="Webster M.T."/>
            <person name="Pourquie O."/>
            <person name="Reymond A."/>
            <person name="Ucla C."/>
            <person name="Antonarakis S.E."/>
            <person name="Long M."/>
            <person name="Emerson J.J."/>
            <person name="Betran E."/>
            <person name="Dupanloup I."/>
            <person name="Kaessmann H."/>
            <person name="Hinrichs A.S."/>
            <person name="Bejerano G."/>
            <person name="Furey T.S."/>
            <person name="Harte R.A."/>
            <person name="Raney B."/>
            <person name="Siepel A."/>
            <person name="Kent W.J."/>
            <person name="Haussler D."/>
            <person name="Eyras E."/>
            <person name="Castelo R."/>
            <person name="Abril J.F."/>
            <person name="Castellano S."/>
            <person name="Camara F."/>
            <person name="Parra G."/>
            <person name="Guigo R."/>
            <person name="Bourque G."/>
            <person name="Tesler G."/>
            <person name="Pevzner P.A."/>
            <person name="Smit A."/>
            <person name="Fulton L.A."/>
            <person name="Mardis E.R."/>
            <person name="Wilson R.K."/>
        </authorList>
    </citation>
    <scope>NUCLEOTIDE SEQUENCE [LARGE SCALE GENOMIC DNA]</scope>
    <source>
        <strain>Red jungle fowl</strain>
    </source>
</reference>
<organism>
    <name type="scientific">Gallus gallus</name>
    <name type="common">Chicken</name>
    <dbReference type="NCBI Taxonomy" id="9031"/>
    <lineage>
        <taxon>Eukaryota</taxon>
        <taxon>Metazoa</taxon>
        <taxon>Chordata</taxon>
        <taxon>Craniata</taxon>
        <taxon>Vertebrata</taxon>
        <taxon>Euteleostomi</taxon>
        <taxon>Archelosauria</taxon>
        <taxon>Archosauria</taxon>
        <taxon>Dinosauria</taxon>
        <taxon>Saurischia</taxon>
        <taxon>Theropoda</taxon>
        <taxon>Coelurosauria</taxon>
        <taxon>Aves</taxon>
        <taxon>Neognathae</taxon>
        <taxon>Galloanserae</taxon>
        <taxon>Galliformes</taxon>
        <taxon>Phasianidae</taxon>
        <taxon>Phasianinae</taxon>
        <taxon>Gallus</taxon>
    </lineage>
</organism>
<proteinExistence type="inferred from homology"/>
<protein>
    <recommendedName>
        <fullName evidence="4">E3 ubiquitin-protein ligase RNF152</fullName>
        <ecNumber evidence="1">2.3.2.27</ecNumber>
    </recommendedName>
    <alternativeName>
        <fullName evidence="1">RING finger protein 152</fullName>
    </alternativeName>
    <alternativeName>
        <fullName evidence="4">RING-type E3 ubiquitin transferase RNF152</fullName>
    </alternativeName>
</protein>
<name>RN152_CHICK</name>
<feature type="chain" id="PRO_0000405836" description="E3 ubiquitin-protein ligase RNF152">
    <location>
        <begin position="1"/>
        <end position="203"/>
    </location>
</feature>
<feature type="transmembrane region" description="Helical" evidence="2">
    <location>
        <begin position="167"/>
        <end position="187"/>
    </location>
</feature>
<feature type="zinc finger region" description="RING-type" evidence="3">
    <location>
        <begin position="12"/>
        <end position="55"/>
    </location>
</feature>
<gene>
    <name evidence="1" type="primary">RNF152</name>
</gene>
<evidence type="ECO:0000250" key="1">
    <source>
        <dbReference type="UniProtKB" id="Q8N8N0"/>
    </source>
</evidence>
<evidence type="ECO:0000255" key="2"/>
<evidence type="ECO:0000255" key="3">
    <source>
        <dbReference type="PROSITE-ProRule" id="PRU00175"/>
    </source>
</evidence>
<evidence type="ECO:0000305" key="4"/>
<sequence>METLSQDSLLECQICFNYYSPRRRPKLLDCKHTCCSVCLQQMRTSQKDLRCPWCRGITKLPPGYSVSQLPDDPEVIAVIAIPHTSEHTPVFIKLPSNGCYMLPLPLSKERAMLPGDIGCRLLPGSQQKSLAVVTIPAEQQPLQGGLPAEAGAEEPDRRGVVKSSTWSGVCTVILVACVLVFLLGIVLHNMSCISKRFTVISCG</sequence>
<dbReference type="EC" id="2.3.2.27" evidence="1"/>
<dbReference type="EMBL" id="AC145926">
    <property type="status" value="NOT_ANNOTATED_CDS"/>
    <property type="molecule type" value="Genomic_DNA"/>
</dbReference>
<dbReference type="RefSeq" id="NP_001291963.1">
    <property type="nucleotide sequence ID" value="NM_001305034.1"/>
</dbReference>
<dbReference type="RefSeq" id="XP_015137664.1">
    <property type="nucleotide sequence ID" value="XM_015282178.4"/>
</dbReference>
<dbReference type="RefSeq" id="XP_015137666.1">
    <property type="nucleotide sequence ID" value="XM_015282180.4"/>
</dbReference>
<dbReference type="RefSeq" id="XP_015137667.1">
    <property type="nucleotide sequence ID" value="XM_015282181.4"/>
</dbReference>
<dbReference type="RefSeq" id="XP_025003037.1">
    <property type="nucleotide sequence ID" value="XM_025147269.3"/>
</dbReference>
<dbReference type="RefSeq" id="XP_040540063.1">
    <property type="nucleotide sequence ID" value="XM_040684129.2"/>
</dbReference>
<dbReference type="RefSeq" id="XP_040540092.1">
    <property type="nucleotide sequence ID" value="XM_040684158.2"/>
</dbReference>
<dbReference type="RefSeq" id="XP_040540111.1">
    <property type="nucleotide sequence ID" value="XM_040684177.2"/>
</dbReference>
<dbReference type="RefSeq" id="XP_040540119.1">
    <property type="nucleotide sequence ID" value="XM_040684185.2"/>
</dbReference>
<dbReference type="RefSeq" id="XP_046767392.1">
    <property type="nucleotide sequence ID" value="XM_046911436.1"/>
</dbReference>
<dbReference type="RefSeq" id="XP_046767393.1">
    <property type="nucleotide sequence ID" value="XM_046911437.1"/>
</dbReference>
<dbReference type="RefSeq" id="XP_046767394.1">
    <property type="nucleotide sequence ID" value="XM_046911438.1"/>
</dbReference>
<dbReference type="RefSeq" id="XP_046767395.1">
    <property type="nucleotide sequence ID" value="XM_046911439.1"/>
</dbReference>
<dbReference type="RefSeq" id="XP_046767396.1">
    <property type="nucleotide sequence ID" value="XM_046911440.1"/>
</dbReference>
<dbReference type="RefSeq" id="XP_046767397.1">
    <property type="nucleotide sequence ID" value="XM_046911441.1"/>
</dbReference>
<dbReference type="RefSeq" id="XP_046767398.1">
    <property type="nucleotide sequence ID" value="XM_046911442.1"/>
</dbReference>
<dbReference type="RefSeq" id="XP_046767399.1">
    <property type="nucleotide sequence ID" value="XM_046911443.1"/>
</dbReference>
<dbReference type="RefSeq" id="XP_046767400.1">
    <property type="nucleotide sequence ID" value="XM_046911444.1"/>
</dbReference>
<dbReference type="RefSeq" id="XP_046780367.1">
    <property type="nucleotide sequence ID" value="XM_046924411.1"/>
</dbReference>
<dbReference type="FunCoup" id="E1C2W7">
    <property type="interactions" value="23"/>
</dbReference>
<dbReference type="STRING" id="9031.ENSGALP00000042495"/>
<dbReference type="PaxDb" id="9031-ENSGALP00000042495"/>
<dbReference type="Ensembl" id="ENSGALT00000110682">
    <property type="protein sequence ID" value="ENSGALP00000082398"/>
    <property type="gene ID" value="ENSGALG00000062623"/>
</dbReference>
<dbReference type="Ensembl" id="ENSGALT00000113562">
    <property type="protein sequence ID" value="ENSGALP00000085116"/>
    <property type="gene ID" value="ENSGALG00000062623"/>
</dbReference>
<dbReference type="Ensembl" id="ENSGALT00000118381">
    <property type="protein sequence ID" value="ENSGALP00000085386"/>
    <property type="gene ID" value="ENSGALG00000062623"/>
</dbReference>
<dbReference type="Ensembl" id="ENSGALT00000119282">
    <property type="protein sequence ID" value="ENSGALP00000091640"/>
    <property type="gene ID" value="ENSGALG00000062623"/>
</dbReference>
<dbReference type="Ensembl" id="ENSGALT00000128130">
    <property type="protein sequence ID" value="ENSGALP00000077219"/>
    <property type="gene ID" value="ENSGALG00000062623"/>
</dbReference>
<dbReference type="Ensembl" id="ENSGALT00000132959">
    <property type="protein sequence ID" value="ENSGALP00000087144"/>
    <property type="gene ID" value="ENSGALG00000062623"/>
</dbReference>
<dbReference type="Ensembl" id="ENSGALT00000133650">
    <property type="protein sequence ID" value="ENSGALP00000085602"/>
    <property type="gene ID" value="ENSGALG00000062623"/>
</dbReference>
<dbReference type="Ensembl" id="ENSGALT00000138775">
    <property type="protein sequence ID" value="ENSGALP00000088607"/>
    <property type="gene ID" value="ENSGALG00000062623"/>
</dbReference>
<dbReference type="Ensembl" id="ENSGALT00000141261">
    <property type="protein sequence ID" value="ENSGALP00000078063"/>
    <property type="gene ID" value="ENSGALG00000062623"/>
</dbReference>
<dbReference type="Ensembl" id="ENSGALT00000141631">
    <property type="protein sequence ID" value="ENSGALP00000079113"/>
    <property type="gene ID" value="ENSGALG00000062623"/>
</dbReference>
<dbReference type="Ensembl" id="ENSGALT00010029071.1">
    <property type="protein sequence ID" value="ENSGALP00010016830.1"/>
    <property type="gene ID" value="ENSGALG00010012125.1"/>
</dbReference>
<dbReference type="Ensembl" id="ENSGALT00010029074.1">
    <property type="protein sequence ID" value="ENSGALP00010016833.1"/>
    <property type="gene ID" value="ENSGALG00010012125.1"/>
</dbReference>
<dbReference type="Ensembl" id="ENSGALT00010029076.1">
    <property type="protein sequence ID" value="ENSGALP00010016835.1"/>
    <property type="gene ID" value="ENSGALG00010012125.1"/>
</dbReference>
<dbReference type="Ensembl" id="ENSGALT00010029081.1">
    <property type="protein sequence ID" value="ENSGALP00010016842.1"/>
    <property type="gene ID" value="ENSGALG00010012125.1"/>
</dbReference>
<dbReference type="Ensembl" id="ENSGALT00010029088.1">
    <property type="protein sequence ID" value="ENSGALP00010016847.1"/>
    <property type="gene ID" value="ENSGALG00010012125.1"/>
</dbReference>
<dbReference type="Ensembl" id="ENSGALT00010029089.1">
    <property type="protein sequence ID" value="ENSGALP00010016848.1"/>
    <property type="gene ID" value="ENSGALG00010012125.1"/>
</dbReference>
<dbReference type="Ensembl" id="ENSGALT00010029091.1">
    <property type="protein sequence ID" value="ENSGALP00010016850.1"/>
    <property type="gene ID" value="ENSGALG00010012125.1"/>
</dbReference>
<dbReference type="Ensembl" id="ENSGALT00010029093.1">
    <property type="protein sequence ID" value="ENSGALP00010016852.1"/>
    <property type="gene ID" value="ENSGALG00010012125.1"/>
</dbReference>
<dbReference type="Ensembl" id="ENSGALT00010029097.1">
    <property type="protein sequence ID" value="ENSGALP00010016856.1"/>
    <property type="gene ID" value="ENSGALG00010012125.1"/>
</dbReference>
<dbReference type="Ensembl" id="ENSGALT00010029099.1">
    <property type="protein sequence ID" value="ENSGALP00010016858.1"/>
    <property type="gene ID" value="ENSGALG00010012125.1"/>
</dbReference>
<dbReference type="GeneID" id="420909"/>
<dbReference type="KEGG" id="gga:420909"/>
<dbReference type="CTD" id="220441"/>
<dbReference type="VEuPathDB" id="HostDB:geneid_420909"/>
<dbReference type="eggNOG" id="KOG2177">
    <property type="taxonomic scope" value="Eukaryota"/>
</dbReference>
<dbReference type="GeneTree" id="ENSGT00730000111317"/>
<dbReference type="HOGENOM" id="CLU_1414689_0_0_1"/>
<dbReference type="InParanoid" id="E1C2W7"/>
<dbReference type="OMA" id="REIRCPW"/>
<dbReference type="OrthoDB" id="6106880at2759"/>
<dbReference type="PhylomeDB" id="E1C2W7"/>
<dbReference type="TreeFam" id="TF331690"/>
<dbReference type="Reactome" id="R-GGA-8866654">
    <property type="pathway name" value="E3 ubiquitin ligases ubiquitinate target proteins"/>
</dbReference>
<dbReference type="UniPathway" id="UPA00143"/>
<dbReference type="PRO" id="PR:E1C2W7"/>
<dbReference type="Proteomes" id="UP000000539">
    <property type="component" value="Chromosome 2"/>
</dbReference>
<dbReference type="Bgee" id="ENSGALG00000028822">
    <property type="expression patterns" value="Expressed in kidney and 13 other cell types or tissues"/>
</dbReference>
<dbReference type="GO" id="GO:0005765">
    <property type="term" value="C:lysosomal membrane"/>
    <property type="evidence" value="ECO:0000250"/>
    <property type="project" value="UniProtKB"/>
</dbReference>
<dbReference type="GO" id="GO:0005764">
    <property type="term" value="C:lysosome"/>
    <property type="evidence" value="ECO:0000250"/>
    <property type="project" value="UniProtKB"/>
</dbReference>
<dbReference type="GO" id="GO:0031090">
    <property type="term" value="C:organelle membrane"/>
    <property type="evidence" value="ECO:0000250"/>
    <property type="project" value="UniProtKB"/>
</dbReference>
<dbReference type="GO" id="GO:0031267">
    <property type="term" value="F:small GTPase binding"/>
    <property type="evidence" value="ECO:0007669"/>
    <property type="project" value="Ensembl"/>
</dbReference>
<dbReference type="GO" id="GO:0061630">
    <property type="term" value="F:ubiquitin protein ligase activity"/>
    <property type="evidence" value="ECO:0000318"/>
    <property type="project" value="GO_Central"/>
</dbReference>
<dbReference type="GO" id="GO:0004842">
    <property type="term" value="F:ubiquitin-protein transferase activity"/>
    <property type="evidence" value="ECO:0000250"/>
    <property type="project" value="UniProtKB"/>
</dbReference>
<dbReference type="GO" id="GO:0008270">
    <property type="term" value="F:zinc ion binding"/>
    <property type="evidence" value="ECO:0007669"/>
    <property type="project" value="UniProtKB-KW"/>
</dbReference>
<dbReference type="GO" id="GO:0006915">
    <property type="term" value="P:apoptotic process"/>
    <property type="evidence" value="ECO:0007669"/>
    <property type="project" value="InterPro"/>
</dbReference>
<dbReference type="GO" id="GO:0034198">
    <property type="term" value="P:cellular response to amino acid starvation"/>
    <property type="evidence" value="ECO:0000250"/>
    <property type="project" value="UniProtKB"/>
</dbReference>
<dbReference type="GO" id="GO:1904262">
    <property type="term" value="P:negative regulation of TORC1 signaling"/>
    <property type="evidence" value="ECO:0000250"/>
    <property type="project" value="UniProtKB"/>
</dbReference>
<dbReference type="GO" id="GO:0010508">
    <property type="term" value="P:positive regulation of autophagy"/>
    <property type="evidence" value="ECO:0000250"/>
    <property type="project" value="UniProtKB"/>
</dbReference>
<dbReference type="GO" id="GO:0070936">
    <property type="term" value="P:protein K48-linked ubiquitination"/>
    <property type="evidence" value="ECO:0000250"/>
    <property type="project" value="UniProtKB"/>
</dbReference>
<dbReference type="GO" id="GO:0070534">
    <property type="term" value="P:protein K63-linked ubiquitination"/>
    <property type="evidence" value="ECO:0000250"/>
    <property type="project" value="UniProtKB"/>
</dbReference>
<dbReference type="GO" id="GO:0006513">
    <property type="term" value="P:protein monoubiquitination"/>
    <property type="evidence" value="ECO:0000250"/>
    <property type="project" value="UniProtKB"/>
</dbReference>
<dbReference type="CDD" id="cd16548">
    <property type="entry name" value="RING-HC_RNF152"/>
    <property type="match status" value="1"/>
</dbReference>
<dbReference type="FunFam" id="3.30.40.10:FF:000197">
    <property type="entry name" value="E3 ubiquitin-protein ligase RNF152"/>
    <property type="match status" value="1"/>
</dbReference>
<dbReference type="Gene3D" id="3.30.40.10">
    <property type="entry name" value="Zinc/RING finger domain, C3HC4 (zinc finger)"/>
    <property type="match status" value="1"/>
</dbReference>
<dbReference type="InterPro" id="IPR033609">
    <property type="entry name" value="RING_RNF152"/>
</dbReference>
<dbReference type="InterPro" id="IPR045744">
    <property type="entry name" value="RNF152_C"/>
</dbReference>
<dbReference type="InterPro" id="IPR001841">
    <property type="entry name" value="Znf_RING"/>
</dbReference>
<dbReference type="InterPro" id="IPR013083">
    <property type="entry name" value="Znf_RING/FYVE/PHD"/>
</dbReference>
<dbReference type="PANTHER" id="PTHR25464:SF1">
    <property type="entry name" value="E3 UBIQUITIN-PROTEIN LIGASE RNF152"/>
    <property type="match status" value="1"/>
</dbReference>
<dbReference type="PANTHER" id="PTHR25464">
    <property type="entry name" value="TRIPARTITE MOTIF-CONTAINING PROTEIN 2-LIKE PROTEIN"/>
    <property type="match status" value="1"/>
</dbReference>
<dbReference type="Pfam" id="PF19325">
    <property type="entry name" value="RNF152_C"/>
    <property type="match status" value="1"/>
</dbReference>
<dbReference type="Pfam" id="PF14634">
    <property type="entry name" value="zf-RING_5"/>
    <property type="match status" value="1"/>
</dbReference>
<dbReference type="SMART" id="SM00184">
    <property type="entry name" value="RING"/>
    <property type="match status" value="1"/>
</dbReference>
<dbReference type="SUPFAM" id="SSF57850">
    <property type="entry name" value="RING/U-box"/>
    <property type="match status" value="1"/>
</dbReference>
<dbReference type="PROSITE" id="PS50089">
    <property type="entry name" value="ZF_RING_2"/>
    <property type="match status" value="1"/>
</dbReference>